<dbReference type="EMBL" id="AE005673">
    <property type="protein sequence ID" value="AAK22000.1"/>
    <property type="molecule type" value="Genomic_DNA"/>
</dbReference>
<dbReference type="PIR" id="D87250">
    <property type="entry name" value="D87250"/>
</dbReference>
<dbReference type="RefSeq" id="NP_418832.1">
    <property type="nucleotide sequence ID" value="NC_002696.2"/>
</dbReference>
<dbReference type="RefSeq" id="WP_010917902.1">
    <property type="nucleotide sequence ID" value="NC_002696.2"/>
</dbReference>
<dbReference type="SMR" id="Q9AC54"/>
<dbReference type="STRING" id="190650.CC_0012"/>
<dbReference type="EnsemblBacteria" id="AAK22000">
    <property type="protein sequence ID" value="AAK22000"/>
    <property type="gene ID" value="CC_0012"/>
</dbReference>
<dbReference type="KEGG" id="ccr:CC_0012"/>
<dbReference type="PATRIC" id="fig|190650.5.peg.13"/>
<dbReference type="eggNOG" id="COG0249">
    <property type="taxonomic scope" value="Bacteria"/>
</dbReference>
<dbReference type="HOGENOM" id="CLU_002472_4_0_5"/>
<dbReference type="BioCyc" id="CAULO:CC0012-MONOMER"/>
<dbReference type="Proteomes" id="UP000001816">
    <property type="component" value="Chromosome"/>
</dbReference>
<dbReference type="GO" id="GO:0005829">
    <property type="term" value="C:cytosol"/>
    <property type="evidence" value="ECO:0007669"/>
    <property type="project" value="TreeGrafter"/>
</dbReference>
<dbReference type="GO" id="GO:0005524">
    <property type="term" value="F:ATP binding"/>
    <property type="evidence" value="ECO:0007669"/>
    <property type="project" value="UniProtKB-UniRule"/>
</dbReference>
<dbReference type="GO" id="GO:0140664">
    <property type="term" value="F:ATP-dependent DNA damage sensor activity"/>
    <property type="evidence" value="ECO:0007669"/>
    <property type="project" value="InterPro"/>
</dbReference>
<dbReference type="GO" id="GO:0003684">
    <property type="term" value="F:damaged DNA binding"/>
    <property type="evidence" value="ECO:0007669"/>
    <property type="project" value="UniProtKB-UniRule"/>
</dbReference>
<dbReference type="GO" id="GO:0030983">
    <property type="term" value="F:mismatched DNA binding"/>
    <property type="evidence" value="ECO:0007669"/>
    <property type="project" value="InterPro"/>
</dbReference>
<dbReference type="GO" id="GO:0006298">
    <property type="term" value="P:mismatch repair"/>
    <property type="evidence" value="ECO:0007669"/>
    <property type="project" value="UniProtKB-UniRule"/>
</dbReference>
<dbReference type="CDD" id="cd03284">
    <property type="entry name" value="ABC_MutS1"/>
    <property type="match status" value="1"/>
</dbReference>
<dbReference type="FunFam" id="3.40.1170.10:FF:000001">
    <property type="entry name" value="DNA mismatch repair protein MutS"/>
    <property type="match status" value="1"/>
</dbReference>
<dbReference type="Gene3D" id="1.10.1420.10">
    <property type="match status" value="2"/>
</dbReference>
<dbReference type="Gene3D" id="6.10.140.430">
    <property type="match status" value="1"/>
</dbReference>
<dbReference type="Gene3D" id="3.40.1170.10">
    <property type="entry name" value="DNA repair protein MutS, domain I"/>
    <property type="match status" value="1"/>
</dbReference>
<dbReference type="Gene3D" id="3.30.420.110">
    <property type="entry name" value="MutS, connector domain"/>
    <property type="match status" value="1"/>
</dbReference>
<dbReference type="Gene3D" id="3.40.50.300">
    <property type="entry name" value="P-loop containing nucleotide triphosphate hydrolases"/>
    <property type="match status" value="1"/>
</dbReference>
<dbReference type="HAMAP" id="MF_00096">
    <property type="entry name" value="MutS"/>
    <property type="match status" value="1"/>
</dbReference>
<dbReference type="InterPro" id="IPR005748">
    <property type="entry name" value="DNA_mismatch_repair_MutS"/>
</dbReference>
<dbReference type="InterPro" id="IPR007695">
    <property type="entry name" value="DNA_mismatch_repair_MutS-lik_N"/>
</dbReference>
<dbReference type="InterPro" id="IPR017261">
    <property type="entry name" value="DNA_mismatch_repair_MutS/MSH"/>
</dbReference>
<dbReference type="InterPro" id="IPR000432">
    <property type="entry name" value="DNA_mismatch_repair_MutS_C"/>
</dbReference>
<dbReference type="InterPro" id="IPR007861">
    <property type="entry name" value="DNA_mismatch_repair_MutS_clamp"/>
</dbReference>
<dbReference type="InterPro" id="IPR007696">
    <property type="entry name" value="DNA_mismatch_repair_MutS_core"/>
</dbReference>
<dbReference type="InterPro" id="IPR016151">
    <property type="entry name" value="DNA_mismatch_repair_MutS_N"/>
</dbReference>
<dbReference type="InterPro" id="IPR036187">
    <property type="entry name" value="DNA_mismatch_repair_MutS_sf"/>
</dbReference>
<dbReference type="InterPro" id="IPR007860">
    <property type="entry name" value="DNA_mmatch_repair_MutS_con_dom"/>
</dbReference>
<dbReference type="InterPro" id="IPR045076">
    <property type="entry name" value="MutS"/>
</dbReference>
<dbReference type="InterPro" id="IPR036678">
    <property type="entry name" value="MutS_con_dom_sf"/>
</dbReference>
<dbReference type="InterPro" id="IPR027417">
    <property type="entry name" value="P-loop_NTPase"/>
</dbReference>
<dbReference type="NCBIfam" id="TIGR01070">
    <property type="entry name" value="mutS1"/>
    <property type="match status" value="1"/>
</dbReference>
<dbReference type="NCBIfam" id="NF003810">
    <property type="entry name" value="PRK05399.1"/>
    <property type="match status" value="1"/>
</dbReference>
<dbReference type="PANTHER" id="PTHR11361:SF34">
    <property type="entry name" value="DNA MISMATCH REPAIR PROTEIN MSH1, MITOCHONDRIAL"/>
    <property type="match status" value="1"/>
</dbReference>
<dbReference type="PANTHER" id="PTHR11361">
    <property type="entry name" value="DNA MISMATCH REPAIR PROTEIN MUTS FAMILY MEMBER"/>
    <property type="match status" value="1"/>
</dbReference>
<dbReference type="Pfam" id="PF01624">
    <property type="entry name" value="MutS_I"/>
    <property type="match status" value="1"/>
</dbReference>
<dbReference type="Pfam" id="PF05188">
    <property type="entry name" value="MutS_II"/>
    <property type="match status" value="1"/>
</dbReference>
<dbReference type="Pfam" id="PF05192">
    <property type="entry name" value="MutS_III"/>
    <property type="match status" value="1"/>
</dbReference>
<dbReference type="Pfam" id="PF05190">
    <property type="entry name" value="MutS_IV"/>
    <property type="match status" value="1"/>
</dbReference>
<dbReference type="Pfam" id="PF00488">
    <property type="entry name" value="MutS_V"/>
    <property type="match status" value="1"/>
</dbReference>
<dbReference type="PIRSF" id="PIRSF037677">
    <property type="entry name" value="DNA_mis_repair_Msh6"/>
    <property type="match status" value="1"/>
</dbReference>
<dbReference type="SMART" id="SM00534">
    <property type="entry name" value="MUTSac"/>
    <property type="match status" value="1"/>
</dbReference>
<dbReference type="SMART" id="SM00533">
    <property type="entry name" value="MUTSd"/>
    <property type="match status" value="1"/>
</dbReference>
<dbReference type="SUPFAM" id="SSF55271">
    <property type="entry name" value="DNA repair protein MutS, domain I"/>
    <property type="match status" value="1"/>
</dbReference>
<dbReference type="SUPFAM" id="SSF53150">
    <property type="entry name" value="DNA repair protein MutS, domain II"/>
    <property type="match status" value="1"/>
</dbReference>
<dbReference type="SUPFAM" id="SSF48334">
    <property type="entry name" value="DNA repair protein MutS, domain III"/>
    <property type="match status" value="1"/>
</dbReference>
<dbReference type="SUPFAM" id="SSF52540">
    <property type="entry name" value="P-loop containing nucleoside triphosphate hydrolases"/>
    <property type="match status" value="1"/>
</dbReference>
<dbReference type="PROSITE" id="PS00486">
    <property type="entry name" value="DNA_MISMATCH_REPAIR_2"/>
    <property type="match status" value="1"/>
</dbReference>
<accession>Q9AC54</accession>
<proteinExistence type="inferred from homology"/>
<reference key="1">
    <citation type="journal article" date="2001" name="Proc. Natl. Acad. Sci. U.S.A.">
        <title>Complete genome sequence of Caulobacter crescentus.</title>
        <authorList>
            <person name="Nierman W.C."/>
            <person name="Feldblyum T.V."/>
            <person name="Laub M.T."/>
            <person name="Paulsen I.T."/>
            <person name="Nelson K.E."/>
            <person name="Eisen J.A."/>
            <person name="Heidelberg J.F."/>
            <person name="Alley M.R.K."/>
            <person name="Ohta N."/>
            <person name="Maddock J.R."/>
            <person name="Potocka I."/>
            <person name="Nelson W.C."/>
            <person name="Newton A."/>
            <person name="Stephens C."/>
            <person name="Phadke N.D."/>
            <person name="Ely B."/>
            <person name="DeBoy R.T."/>
            <person name="Dodson R.J."/>
            <person name="Durkin A.S."/>
            <person name="Gwinn M.L."/>
            <person name="Haft D.H."/>
            <person name="Kolonay J.F."/>
            <person name="Smit J."/>
            <person name="Craven M.B."/>
            <person name="Khouri H.M."/>
            <person name="Shetty J."/>
            <person name="Berry K.J."/>
            <person name="Utterback T.R."/>
            <person name="Tran K."/>
            <person name="Wolf A.M."/>
            <person name="Vamathevan J.J."/>
            <person name="Ermolaeva M.D."/>
            <person name="White O."/>
            <person name="Salzberg S.L."/>
            <person name="Venter J.C."/>
            <person name="Shapiro L."/>
            <person name="Fraser C.M."/>
        </authorList>
    </citation>
    <scope>NUCLEOTIDE SEQUENCE [LARGE SCALE GENOMIC DNA]</scope>
    <source>
        <strain>ATCC 19089 / CIP 103742 / CB 15</strain>
    </source>
</reference>
<protein>
    <recommendedName>
        <fullName evidence="1">DNA mismatch repair protein MutS</fullName>
    </recommendedName>
</protein>
<keyword id="KW-0067">ATP-binding</keyword>
<keyword id="KW-0227">DNA damage</keyword>
<keyword id="KW-0234">DNA repair</keyword>
<keyword id="KW-0238">DNA-binding</keyword>
<keyword id="KW-0547">Nucleotide-binding</keyword>
<keyword id="KW-1185">Reference proteome</keyword>
<comment type="function">
    <text evidence="1">This protein is involved in the repair of mismatches in DNA. It is possible that it carries out the mismatch recognition step. This protein has a weak ATPase activity.</text>
</comment>
<comment type="similarity">
    <text evidence="1">Belongs to the DNA mismatch repair MutS family.</text>
</comment>
<name>MUTS_CAUVC</name>
<sequence length="903" mass="96008">MNAHATPTPAHEIDPTGATPVMAQFFEMKARQPDALIFFRMGDFYELFFDDAYKAAAALGISQTFRGTHNGQPIPMAGVPQHAAEAYLSKLIRLGFKVAVCEQMEDPAEAKKRGSKAVVRRDIVRVVTPGTLTEDGLLDARGANRLAAVALRAGQAAVASVELSTGEVEVLAVAKEGVAPILAALAPSETLVADRLLSDDSLSQTLRICGGLVQPMPSALSEPQASETRVKRLYGVETLDGFGGLSPAEIGALGLIAAHLEMTQAGRLPALRAPRRAADADVMAIDPATRSSLEIDRTQSGDRNGSLLAAIDRTVTAGGARMLASRLARPLLDVAAIDQRLDAVEWFVEHRQLRQRLREVLKGAGDMARALSRLALGRGGPRDLGCIRDTLKVGERLAGMAGGAPDPLSPPPFELEHAFKALTPALHEGLSQFLTTLEHGLGPDLPALARDGGFVAAGVRPELDQARGLRDDSRKVIAALESQLALESGVPLKIRHNGVLGYFVEATAGKADPLFQPPLNATFIHRQTLANQVRFTTVELADLDARIAQAAERALAMEVAAFEDWREQARLLADAIQIASEALARIDVASSLAEWAEDAGAVRPVVDASYAFDAKAARHPVVEAAVKRAGEPYTPNDCRLDASGETAARLSIVTGPNMAGKSTFLRQNALLAILAQSGCYVPAASFRLGVVDRLFSRVGAGDDLARGRSTFMMEMVETASILTQAGPRSLVILDEIGRGTATYDGLAIAWACAEALHDTNRCRALFATHYHELATLETRMAFVSNLSLRAKEWNGDLVFLHEAAPGPADRSYGVQVAKLAGVPAPVVVRAREVLDRLESKDQSPAKLDDLPLFAVSQAVAVTSAPAKAAPSAVETSLADLDVDGMSPREALEALYRLKGLLTA</sequence>
<organism>
    <name type="scientific">Caulobacter vibrioides (strain ATCC 19089 / CIP 103742 / CB 15)</name>
    <name type="common">Caulobacter crescentus</name>
    <dbReference type="NCBI Taxonomy" id="190650"/>
    <lineage>
        <taxon>Bacteria</taxon>
        <taxon>Pseudomonadati</taxon>
        <taxon>Pseudomonadota</taxon>
        <taxon>Alphaproteobacteria</taxon>
        <taxon>Caulobacterales</taxon>
        <taxon>Caulobacteraceae</taxon>
        <taxon>Caulobacter</taxon>
    </lineage>
</organism>
<evidence type="ECO:0000255" key="1">
    <source>
        <dbReference type="HAMAP-Rule" id="MF_00096"/>
    </source>
</evidence>
<feature type="chain" id="PRO_0000115082" description="DNA mismatch repair protein MutS">
    <location>
        <begin position="1"/>
        <end position="903"/>
    </location>
</feature>
<feature type="binding site" evidence="1">
    <location>
        <begin position="655"/>
        <end position="662"/>
    </location>
    <ligand>
        <name>ATP</name>
        <dbReference type="ChEBI" id="CHEBI:30616"/>
    </ligand>
</feature>
<gene>
    <name evidence="1" type="primary">mutS</name>
    <name type="ordered locus">CC_0012</name>
</gene>